<proteinExistence type="inferred from homology"/>
<gene>
    <name type="primary">smg1</name>
    <name type="ORF">DDB_G0275845</name>
</gene>
<name>SMG1_DICDI</name>
<accession>Q553E9</accession>
<accession>Q86H67</accession>
<feature type="chain" id="PRO_0000376003" description="Probable serine/threonine-protein kinase smg1">
    <location>
        <begin position="1"/>
        <end position="2344"/>
    </location>
</feature>
<feature type="domain" description="FAT" evidence="4">
    <location>
        <begin position="1136"/>
        <end position="1552"/>
    </location>
</feature>
<feature type="domain" description="PI3K/PI4K catalytic" evidence="3">
    <location>
        <begin position="1808"/>
        <end position="2192"/>
    </location>
</feature>
<feature type="domain" description="FATC" evidence="4 5">
    <location>
        <begin position="2312"/>
        <end position="2344"/>
    </location>
</feature>
<feature type="region of interest" description="Disordered" evidence="6">
    <location>
        <begin position="1"/>
        <end position="38"/>
    </location>
</feature>
<feature type="region of interest" description="Disordered" evidence="6">
    <location>
        <begin position="230"/>
        <end position="285"/>
    </location>
</feature>
<feature type="region of interest" description="Disordered" evidence="6">
    <location>
        <begin position="508"/>
        <end position="532"/>
    </location>
</feature>
<feature type="region of interest" description="Disordered" evidence="6">
    <location>
        <begin position="927"/>
        <end position="948"/>
    </location>
</feature>
<feature type="region of interest" description="Disordered" evidence="6">
    <location>
        <begin position="1112"/>
        <end position="1145"/>
    </location>
</feature>
<feature type="region of interest" description="Disordered" evidence="6">
    <location>
        <begin position="1306"/>
        <end position="1330"/>
    </location>
</feature>
<feature type="region of interest" description="Disordered" evidence="6">
    <location>
        <begin position="1412"/>
        <end position="1433"/>
    </location>
</feature>
<feature type="region of interest" description="Disordered" evidence="6">
    <location>
        <begin position="1776"/>
        <end position="1796"/>
    </location>
</feature>
<feature type="region of interest" description="G-loop" evidence="3">
    <location>
        <begin position="1814"/>
        <end position="1820"/>
    </location>
</feature>
<feature type="region of interest" description="Disordered" evidence="6">
    <location>
        <begin position="1933"/>
        <end position="1967"/>
    </location>
</feature>
<feature type="region of interest" description="Catalytic loop" evidence="3">
    <location>
        <begin position="2059"/>
        <end position="2067"/>
    </location>
</feature>
<feature type="region of interest" description="Activation loop" evidence="3">
    <location>
        <begin position="2079"/>
        <end position="2103"/>
    </location>
</feature>
<feature type="region of interest" description="Disordered" evidence="6">
    <location>
        <begin position="2157"/>
        <end position="2279"/>
    </location>
</feature>
<feature type="coiled-coil region" evidence="2">
    <location>
        <begin position="264"/>
        <end position="293"/>
    </location>
</feature>
<feature type="coiled-coil region" evidence="2">
    <location>
        <begin position="378"/>
        <end position="405"/>
    </location>
</feature>
<feature type="compositionally biased region" description="Low complexity" evidence="6">
    <location>
        <begin position="233"/>
        <end position="252"/>
    </location>
</feature>
<feature type="compositionally biased region" description="Basic and acidic residues" evidence="6">
    <location>
        <begin position="255"/>
        <end position="273"/>
    </location>
</feature>
<feature type="compositionally biased region" description="Low complexity" evidence="6">
    <location>
        <begin position="275"/>
        <end position="285"/>
    </location>
</feature>
<feature type="compositionally biased region" description="Low complexity" evidence="6">
    <location>
        <begin position="1933"/>
        <end position="1959"/>
    </location>
</feature>
<feature type="compositionally biased region" description="Low complexity" evidence="6">
    <location>
        <begin position="2160"/>
        <end position="2172"/>
    </location>
</feature>
<feature type="compositionally biased region" description="Low complexity" evidence="6">
    <location>
        <begin position="2186"/>
        <end position="2199"/>
    </location>
</feature>
<feature type="compositionally biased region" description="Polar residues" evidence="6">
    <location>
        <begin position="2200"/>
        <end position="2214"/>
    </location>
</feature>
<feature type="compositionally biased region" description="Low complexity" evidence="6">
    <location>
        <begin position="2215"/>
        <end position="2254"/>
    </location>
</feature>
<feature type="compositionally biased region" description="Acidic residues" evidence="6">
    <location>
        <begin position="2255"/>
        <end position="2277"/>
    </location>
</feature>
<comment type="function">
    <text evidence="1">Serine/threonine protein kinase involved in mRNA surveillance. Recognizes the substrate consensus sequence [ST]-Q. Involved in nonsense-mediated decay (NMD) of mRNAs containing premature stop codons by phosphorylating upf1 (By similarity).</text>
</comment>
<comment type="catalytic activity">
    <reaction>
        <text>L-seryl-[protein] + ATP = O-phospho-L-seryl-[protein] + ADP + H(+)</text>
        <dbReference type="Rhea" id="RHEA:17989"/>
        <dbReference type="Rhea" id="RHEA-COMP:9863"/>
        <dbReference type="Rhea" id="RHEA-COMP:11604"/>
        <dbReference type="ChEBI" id="CHEBI:15378"/>
        <dbReference type="ChEBI" id="CHEBI:29999"/>
        <dbReference type="ChEBI" id="CHEBI:30616"/>
        <dbReference type="ChEBI" id="CHEBI:83421"/>
        <dbReference type="ChEBI" id="CHEBI:456216"/>
        <dbReference type="EC" id="2.7.11.1"/>
    </reaction>
</comment>
<comment type="catalytic activity">
    <reaction>
        <text>L-threonyl-[protein] + ATP = O-phospho-L-threonyl-[protein] + ADP + H(+)</text>
        <dbReference type="Rhea" id="RHEA:46608"/>
        <dbReference type="Rhea" id="RHEA-COMP:11060"/>
        <dbReference type="Rhea" id="RHEA-COMP:11605"/>
        <dbReference type="ChEBI" id="CHEBI:15378"/>
        <dbReference type="ChEBI" id="CHEBI:30013"/>
        <dbReference type="ChEBI" id="CHEBI:30616"/>
        <dbReference type="ChEBI" id="CHEBI:61977"/>
        <dbReference type="ChEBI" id="CHEBI:456216"/>
        <dbReference type="EC" id="2.7.11.1"/>
    </reaction>
</comment>
<comment type="similarity">
    <text evidence="7">Belongs to the PI3/PI4-kinase family.</text>
</comment>
<dbReference type="EC" id="2.7.11.1"/>
<dbReference type="EMBL" id="AAFI02000013">
    <property type="protein sequence ID" value="EAL69673.1"/>
    <property type="molecule type" value="Genomic_DNA"/>
</dbReference>
<dbReference type="RefSeq" id="XP_643468.1">
    <property type="nucleotide sequence ID" value="XM_638376.1"/>
</dbReference>
<dbReference type="FunCoup" id="Q553E9">
    <property type="interactions" value="427"/>
</dbReference>
<dbReference type="STRING" id="44689.Q553E9"/>
<dbReference type="GlyGen" id="Q553E9">
    <property type="glycosylation" value="2 sites"/>
</dbReference>
<dbReference type="PaxDb" id="44689-DDB0229297"/>
<dbReference type="EnsemblProtists" id="EAL69673">
    <property type="protein sequence ID" value="EAL69673"/>
    <property type="gene ID" value="DDB_G0275845"/>
</dbReference>
<dbReference type="GeneID" id="8620049"/>
<dbReference type="KEGG" id="ddi:DDB_G0275845"/>
<dbReference type="dictyBase" id="DDB_G0275845">
    <property type="gene designation" value="smg1"/>
</dbReference>
<dbReference type="VEuPathDB" id="AmoebaDB:DDB_G0275845"/>
<dbReference type="eggNOG" id="KOG0891">
    <property type="taxonomic scope" value="Eukaryota"/>
</dbReference>
<dbReference type="HOGENOM" id="CLU_229740_0_0_1"/>
<dbReference type="InParanoid" id="Q553E9"/>
<dbReference type="OMA" id="PFRMTQI"/>
<dbReference type="Reactome" id="R-DDI-975957">
    <property type="pathway name" value="Nonsense Mediated Decay (NMD) enhanced by the Exon Junction Complex (EJC)"/>
</dbReference>
<dbReference type="PRO" id="PR:Q553E9"/>
<dbReference type="Proteomes" id="UP000002195">
    <property type="component" value="Chromosome 2"/>
</dbReference>
<dbReference type="GO" id="GO:0005737">
    <property type="term" value="C:cytoplasm"/>
    <property type="evidence" value="ECO:0000318"/>
    <property type="project" value="GO_Central"/>
</dbReference>
<dbReference type="GO" id="GO:0005634">
    <property type="term" value="C:nucleus"/>
    <property type="evidence" value="ECO:0000318"/>
    <property type="project" value="GO_Central"/>
</dbReference>
<dbReference type="GO" id="GO:0038201">
    <property type="term" value="C:TOR complex"/>
    <property type="evidence" value="ECO:0000318"/>
    <property type="project" value="GO_Central"/>
</dbReference>
<dbReference type="GO" id="GO:0005524">
    <property type="term" value="F:ATP binding"/>
    <property type="evidence" value="ECO:0007669"/>
    <property type="project" value="UniProtKB-KW"/>
</dbReference>
<dbReference type="GO" id="GO:0106310">
    <property type="term" value="F:protein serine kinase activity"/>
    <property type="evidence" value="ECO:0007669"/>
    <property type="project" value="RHEA"/>
</dbReference>
<dbReference type="GO" id="GO:0004674">
    <property type="term" value="F:protein serine/threonine kinase activity"/>
    <property type="evidence" value="ECO:0000318"/>
    <property type="project" value="GO_Central"/>
</dbReference>
<dbReference type="GO" id="GO:0016242">
    <property type="term" value="P:negative regulation of macroautophagy"/>
    <property type="evidence" value="ECO:0000318"/>
    <property type="project" value="GO_Central"/>
</dbReference>
<dbReference type="GO" id="GO:0000184">
    <property type="term" value="P:nuclear-transcribed mRNA catabolic process, nonsense-mediated decay"/>
    <property type="evidence" value="ECO:0007669"/>
    <property type="project" value="UniProtKB-KW"/>
</dbReference>
<dbReference type="GO" id="GO:0038202">
    <property type="term" value="P:TORC1 signaling"/>
    <property type="evidence" value="ECO:0000318"/>
    <property type="project" value="GO_Central"/>
</dbReference>
<dbReference type="CDD" id="cd05170">
    <property type="entry name" value="PIKKc_SMG1"/>
    <property type="match status" value="1"/>
</dbReference>
<dbReference type="FunFam" id="1.10.1070.11:FF:000045">
    <property type="entry name" value="Serine/threonine-protein kinase smg-1"/>
    <property type="match status" value="1"/>
</dbReference>
<dbReference type="Gene3D" id="1.10.1070.11">
    <property type="entry name" value="Phosphatidylinositol 3-/4-kinase, catalytic domain"/>
    <property type="match status" value="1"/>
</dbReference>
<dbReference type="Gene3D" id="3.30.1010.10">
    <property type="entry name" value="Phosphatidylinositol 3-kinase Catalytic Subunit, Chain A, domain 4"/>
    <property type="match status" value="1"/>
</dbReference>
<dbReference type="InterPro" id="IPR016024">
    <property type="entry name" value="ARM-type_fold"/>
</dbReference>
<dbReference type="InterPro" id="IPR050517">
    <property type="entry name" value="DDR_Repair_Kinase"/>
</dbReference>
<dbReference type="InterPro" id="IPR003152">
    <property type="entry name" value="FATC_dom"/>
</dbReference>
<dbReference type="InterPro" id="IPR011009">
    <property type="entry name" value="Kinase-like_dom_sf"/>
</dbReference>
<dbReference type="InterPro" id="IPR000403">
    <property type="entry name" value="PI3/4_kinase_cat_dom"/>
</dbReference>
<dbReference type="InterPro" id="IPR036940">
    <property type="entry name" value="PI3/4_kinase_cat_sf"/>
</dbReference>
<dbReference type="InterPro" id="IPR018936">
    <property type="entry name" value="PI3/4_kinase_CS"/>
</dbReference>
<dbReference type="InterPro" id="IPR014009">
    <property type="entry name" value="PIK_FAT"/>
</dbReference>
<dbReference type="InterPro" id="IPR031559">
    <property type="entry name" value="SMG1"/>
</dbReference>
<dbReference type="InterPro" id="IPR039414">
    <property type="entry name" value="SMG1_PIKKc"/>
</dbReference>
<dbReference type="PANTHER" id="PTHR11139">
    <property type="entry name" value="ATAXIA TELANGIECTASIA MUTATED ATM -RELATED"/>
    <property type="match status" value="1"/>
</dbReference>
<dbReference type="PANTHER" id="PTHR11139:SF127">
    <property type="entry name" value="SERINE_THREONINE-PROTEIN KINASE SMG1-RELATED"/>
    <property type="match status" value="1"/>
</dbReference>
<dbReference type="Pfam" id="PF02260">
    <property type="entry name" value="FATC"/>
    <property type="match status" value="1"/>
</dbReference>
<dbReference type="Pfam" id="PF00454">
    <property type="entry name" value="PI3_PI4_kinase"/>
    <property type="match status" value="1"/>
</dbReference>
<dbReference type="Pfam" id="PF15785">
    <property type="entry name" value="SMG1"/>
    <property type="match status" value="1"/>
</dbReference>
<dbReference type="SMART" id="SM01343">
    <property type="entry name" value="FATC"/>
    <property type="match status" value="1"/>
</dbReference>
<dbReference type="SMART" id="SM00146">
    <property type="entry name" value="PI3Kc"/>
    <property type="match status" value="1"/>
</dbReference>
<dbReference type="SUPFAM" id="SSF48371">
    <property type="entry name" value="ARM repeat"/>
    <property type="match status" value="1"/>
</dbReference>
<dbReference type="SUPFAM" id="SSF81995">
    <property type="entry name" value="beta-sandwich domain of Sec23/24"/>
    <property type="match status" value="1"/>
</dbReference>
<dbReference type="SUPFAM" id="SSF56112">
    <property type="entry name" value="Protein kinase-like (PK-like)"/>
    <property type="match status" value="1"/>
</dbReference>
<dbReference type="PROSITE" id="PS51189">
    <property type="entry name" value="FAT"/>
    <property type="match status" value="1"/>
</dbReference>
<dbReference type="PROSITE" id="PS51190">
    <property type="entry name" value="FATC"/>
    <property type="match status" value="1"/>
</dbReference>
<dbReference type="PROSITE" id="PS00916">
    <property type="entry name" value="PI3_4_KINASE_2"/>
    <property type="match status" value="1"/>
</dbReference>
<dbReference type="PROSITE" id="PS50290">
    <property type="entry name" value="PI3_4_KINASE_3"/>
    <property type="match status" value="1"/>
</dbReference>
<evidence type="ECO:0000250" key="1"/>
<evidence type="ECO:0000255" key="2"/>
<evidence type="ECO:0000255" key="3">
    <source>
        <dbReference type="PROSITE-ProRule" id="PRU00269"/>
    </source>
</evidence>
<evidence type="ECO:0000255" key="4">
    <source>
        <dbReference type="PROSITE-ProRule" id="PRU00534"/>
    </source>
</evidence>
<evidence type="ECO:0000255" key="5">
    <source>
        <dbReference type="PROSITE-ProRule" id="PRU00535"/>
    </source>
</evidence>
<evidence type="ECO:0000256" key="6">
    <source>
        <dbReference type="SAM" id="MobiDB-lite"/>
    </source>
</evidence>
<evidence type="ECO:0000305" key="7"/>
<protein>
    <recommendedName>
        <fullName>Probable serine/threonine-protein kinase smg1</fullName>
        <ecNumber>2.7.11.1</ecNumber>
    </recommendedName>
    <alternativeName>
        <fullName>Suppressor with morphological effect on genitalia protein 1</fullName>
    </alternativeName>
</protein>
<reference key="1">
    <citation type="journal article" date="2002" name="Nature">
        <title>Sequence and analysis of chromosome 2 of Dictyostelium discoideum.</title>
        <authorList>
            <person name="Gloeckner G."/>
            <person name="Eichinger L."/>
            <person name="Szafranski K."/>
            <person name="Pachebat J.A."/>
            <person name="Bankier A.T."/>
            <person name="Dear P.H."/>
            <person name="Lehmann R."/>
            <person name="Baumgart C."/>
            <person name="Parra G."/>
            <person name="Abril J.F."/>
            <person name="Guigo R."/>
            <person name="Kumpf K."/>
            <person name="Tunggal B."/>
            <person name="Cox E.C."/>
            <person name="Quail M.A."/>
            <person name="Platzer M."/>
            <person name="Rosenthal A."/>
            <person name="Noegel A.A."/>
        </authorList>
    </citation>
    <scope>NUCLEOTIDE SEQUENCE [LARGE SCALE GENOMIC DNA]</scope>
    <source>
        <strain>AX4</strain>
    </source>
</reference>
<reference key="2">
    <citation type="journal article" date="2005" name="Nature">
        <title>The genome of the social amoeba Dictyostelium discoideum.</title>
        <authorList>
            <person name="Eichinger L."/>
            <person name="Pachebat J.A."/>
            <person name="Gloeckner G."/>
            <person name="Rajandream M.A."/>
            <person name="Sucgang R."/>
            <person name="Berriman M."/>
            <person name="Song J."/>
            <person name="Olsen R."/>
            <person name="Szafranski K."/>
            <person name="Xu Q."/>
            <person name="Tunggal B."/>
            <person name="Kummerfeld S."/>
            <person name="Madera M."/>
            <person name="Konfortov B.A."/>
            <person name="Rivero F."/>
            <person name="Bankier A.T."/>
            <person name="Lehmann R."/>
            <person name="Hamlin N."/>
            <person name="Davies R."/>
            <person name="Gaudet P."/>
            <person name="Fey P."/>
            <person name="Pilcher K."/>
            <person name="Chen G."/>
            <person name="Saunders D."/>
            <person name="Sodergren E.J."/>
            <person name="Davis P."/>
            <person name="Kerhornou A."/>
            <person name="Nie X."/>
            <person name="Hall N."/>
            <person name="Anjard C."/>
            <person name="Hemphill L."/>
            <person name="Bason N."/>
            <person name="Farbrother P."/>
            <person name="Desany B."/>
            <person name="Just E."/>
            <person name="Morio T."/>
            <person name="Rost R."/>
            <person name="Churcher C.M."/>
            <person name="Cooper J."/>
            <person name="Haydock S."/>
            <person name="van Driessche N."/>
            <person name="Cronin A."/>
            <person name="Goodhead I."/>
            <person name="Muzny D.M."/>
            <person name="Mourier T."/>
            <person name="Pain A."/>
            <person name="Lu M."/>
            <person name="Harper D."/>
            <person name="Lindsay R."/>
            <person name="Hauser H."/>
            <person name="James K.D."/>
            <person name="Quiles M."/>
            <person name="Madan Babu M."/>
            <person name="Saito T."/>
            <person name="Buchrieser C."/>
            <person name="Wardroper A."/>
            <person name="Felder M."/>
            <person name="Thangavelu M."/>
            <person name="Johnson D."/>
            <person name="Knights A."/>
            <person name="Loulseged H."/>
            <person name="Mungall K.L."/>
            <person name="Oliver K."/>
            <person name="Price C."/>
            <person name="Quail M.A."/>
            <person name="Urushihara H."/>
            <person name="Hernandez J."/>
            <person name="Rabbinowitsch E."/>
            <person name="Steffen D."/>
            <person name="Sanders M."/>
            <person name="Ma J."/>
            <person name="Kohara Y."/>
            <person name="Sharp S."/>
            <person name="Simmonds M.N."/>
            <person name="Spiegler S."/>
            <person name="Tivey A."/>
            <person name="Sugano S."/>
            <person name="White B."/>
            <person name="Walker D."/>
            <person name="Woodward J.R."/>
            <person name="Winckler T."/>
            <person name="Tanaka Y."/>
            <person name="Shaulsky G."/>
            <person name="Schleicher M."/>
            <person name="Weinstock G.M."/>
            <person name="Rosenthal A."/>
            <person name="Cox E.C."/>
            <person name="Chisholm R.L."/>
            <person name="Gibbs R.A."/>
            <person name="Loomis W.F."/>
            <person name="Platzer M."/>
            <person name="Kay R.R."/>
            <person name="Williams J.G."/>
            <person name="Dear P.H."/>
            <person name="Noegel A.A."/>
            <person name="Barrell B.G."/>
            <person name="Kuspa A."/>
        </authorList>
    </citation>
    <scope>NUCLEOTIDE SEQUENCE [LARGE SCALE GENOMIC DNA]</scope>
    <source>
        <strain>AX4</strain>
    </source>
</reference>
<reference key="3">
    <citation type="journal article" date="2006" name="PLoS Genet.">
        <title>The dictyostelium kinome -- analysis of the protein kinases from a simple model organism.</title>
        <authorList>
            <person name="Goldberg J.M."/>
            <person name="Manning G."/>
            <person name="Liu A."/>
            <person name="Fey P."/>
            <person name="Pilcher K.E."/>
            <person name="Xu Y."/>
            <person name="Smith J.L."/>
        </authorList>
    </citation>
    <scope>GENE FAMILY</scope>
    <scope>NOMENCLATURE</scope>
</reference>
<organism>
    <name type="scientific">Dictyostelium discoideum</name>
    <name type="common">Social amoeba</name>
    <dbReference type="NCBI Taxonomy" id="44689"/>
    <lineage>
        <taxon>Eukaryota</taxon>
        <taxon>Amoebozoa</taxon>
        <taxon>Evosea</taxon>
        <taxon>Eumycetozoa</taxon>
        <taxon>Dictyostelia</taxon>
        <taxon>Dictyosteliales</taxon>
        <taxon>Dictyosteliaceae</taxon>
        <taxon>Dictyostelium</taxon>
    </lineage>
</organism>
<sequence length="2344" mass="266637">MNDSNSSNDSCNTENNTLTATKNSINNTTTTTTTPNNNVNCLKTSGSIKLSASSVPFIPGSSASLPSILSNQYKLAASNNVSNNIMMISTPIISSAQQQQQQVPPPQQTTTTTTATATAITPTPITTSQSTSSSMLNLPLKVGKESIETLFRNRFHPKNNIRETVLSSLQSILIPDLSDTINNTKENIEYFYNMIIDENNYILKLLLLNIINDTKRNLVVYNYNQQHQLPIQNTSSPNTPSSTTTTTTTSTKPSKRGDKERERGRRNKDKINEKQLQQQQLQQLQLQQQLDHEGSSLYLPFSSLLSFIKPDKQQQPQQSQQSQLNEIDQMVRPKSLPKDDNDSDNFNIRVLEYNLKLLIKIYFKVSMYQDSIKTHIFDLYIQINQAISEQQRQLQEKEKESKTSKPIPQPIISLVIPTVLVSIGDIIKYKYATPSPPNLTPTTTTKMEEEERIINTILINEFKKTDVSIIESNLYLFECILSISVSNEPTIVVPNTTTATTATTATTSNTSTAAAATTTTPTLSTSSSSLSPPASTQSSLSLSSSSSAVIAPTTVGYIFKFNKELFRKLIALVYSTVVQHQITLSTVFTTLVLKGYLNEDQIQKLLNITLFKLSDPSEQVKLSYLTLLSKMVSYFDLNHQKNLNHKVNDISLPYKLLIMGSTSQPFFNGQIFKKIFDWIMGIGKDQPSFDSLTKYLIDLFDSFNVISILFNEQNKILSQQYLAAQSTMITPPLSLHQIDDRRKFETLISKSDELIWFWTVWECSKFCIANRLKSPYGSAFQTFEIFEKLLLQLNKDRRDFKKIKILLHFMESMEKLIFSTVNGSVLVQSLNNKETQFFRHNVRVCEDWFSRIRVNLLKASILSSSTPDIIRHASLRVQDIQANRFVLDSNTAHFELEFCILHLANALQQLNETESLQGLSNWSDINLNNSDNNNNNNNKNNNNNNNSTFFNNGNINKYTLKLPWMKGVILRSKQKFEESISSLLSVPPMLESNSISFPFVLEQIIKSYLDISNFTEVEQFLQNYQNQIQQQSNSLIIYKDTFIKTLGSFYRGEMEEAHAFAKRTESQNHILQREQLGLGLLGNQIMTDELLLSIMVNQKDLFNNTNIINNNNSGGSSSGTATATAVTTTTTTTTTTTTTTTTTTNTNNDIIGFSNNINSMLKLTKNNILKALNYLGLESNVQTFQYLTQLKIMDEIENGVYNSRVVPINNQIGFLERLRRVRGHISNTKQRSDILLSNIPLTEKMIKLSRKFENYKFSSKLLDTILESHSSSYYLERCKLKYLNGKQTEATLDLIKYAHRDITIPSSSTTTTTTTTTTTPPSTSSNTATTTNNINIDELSTQKFKVYTEIIKYLNSNPSIITELSSSNYSIPQEQLNPEYYFKKATLTKPENSKLWITYADWILNEKSNISEQNDEESLNGGGSGGNENSSNEMLRLKNTNTNELKTAVEAYFQFLKYSMLDGNSNGGLNIRATLKILNILVCSGNKLVETFERCLNELTSTRPFTIIIPQLFARLSHPDTFVQKYVVEILNRIGRDNPNKIVYQTIVGSLNFTNTNNNNNSSCAAATTDDGLDIELLQKQYPNYLQILNIKENLLKHSELLVKETETLIYQLGKLTTLWDDNWQYFIEQIQGWVYINTKQWNDDYQQLKATIKNPTILKHTLKKKNQELLQPIYEKLKRLTAATVLSVCKTPHEKWFTKCHFETINKTIRAFEKQNKPTSPFDVLHDLIAEFQQYRLISLSLSSVNPSLALFRPTITQMPGTDLNYFNINHIHHHHHHHNHHGNNNNQHSTSSGNLPIQNQVTIQLIKPTIYLLPTKTKPKKMAMLGSDGNLYYYLLKGREDLHLDERIMQLLNVVDQLLMNDKKPTLKLLRTRNYSVIPLSQSSGLIQWVEGAVPLFSIYKNWYKNDQVYKQQQQQQQQLQQQQQQQQQQQQQQPQPQQQPQQQPQQQPQQQPQPQQNSTTTSNIVNKPIIARPVDIFYAKITPLLEKAGLNFMTPRSEWPKEILIQVLNELMQETPKWILQRELWFSSSSSSELFLKTQSYSRSLALMSVIGYMIGLGDRHLDNILLDLKTGEIVHIDYNICFEKGAELKIPERVPFRMTQIFEYALGLTGVQGTFRETSIQIMHLLRKNKDILLNLLETFIYDPLFDWKHSNKQTNNNNNNNNNNNMNQAAGEQESIEKKQSSNNSSNPIISTPTKLQQQQKLPNSPLSISSNNTNSTNNNNNNNNNNNNNNNNNNNNNNKDQDSDSSQSQEDEDNNVVEGEGGEGGEGDIDELNLVQDSSNGKDAFKSIQGLTVVNQVRLKLEGTEKKLSIPDQIDLIIRESMNVENLSSTYEGWSPWV</sequence>
<keyword id="KW-0067">ATP-binding</keyword>
<keyword id="KW-0175">Coiled coil</keyword>
<keyword id="KW-0418">Kinase</keyword>
<keyword id="KW-0866">Nonsense-mediated mRNA decay</keyword>
<keyword id="KW-0547">Nucleotide-binding</keyword>
<keyword id="KW-1185">Reference proteome</keyword>
<keyword id="KW-0723">Serine/threonine-protein kinase</keyword>
<keyword id="KW-0808">Transferase</keyword>